<name>TAOK1_RAT</name>
<organism>
    <name type="scientific">Rattus norvegicus</name>
    <name type="common">Rat</name>
    <dbReference type="NCBI Taxonomy" id="10116"/>
    <lineage>
        <taxon>Eukaryota</taxon>
        <taxon>Metazoa</taxon>
        <taxon>Chordata</taxon>
        <taxon>Craniata</taxon>
        <taxon>Vertebrata</taxon>
        <taxon>Euteleostomi</taxon>
        <taxon>Mammalia</taxon>
        <taxon>Eutheria</taxon>
        <taxon>Euarchontoglires</taxon>
        <taxon>Glires</taxon>
        <taxon>Rodentia</taxon>
        <taxon>Myomorpha</taxon>
        <taxon>Muroidea</taxon>
        <taxon>Muridae</taxon>
        <taxon>Murinae</taxon>
        <taxon>Rattus</taxon>
    </lineage>
</organism>
<proteinExistence type="evidence at protein level"/>
<keyword id="KW-0053">Apoptosis</keyword>
<keyword id="KW-0067">ATP-binding</keyword>
<keyword id="KW-0175">Coiled coil</keyword>
<keyword id="KW-0963">Cytoplasm</keyword>
<keyword id="KW-0227">DNA damage</keyword>
<keyword id="KW-0234">DNA repair</keyword>
<keyword id="KW-0418">Kinase</keyword>
<keyword id="KW-0547">Nucleotide-binding</keyword>
<keyword id="KW-0597">Phosphoprotein</keyword>
<keyword id="KW-1185">Reference proteome</keyword>
<keyword id="KW-0723">Serine/threonine-protein kinase</keyword>
<keyword id="KW-0808">Transferase</keyword>
<accession>O88664</accession>
<feature type="chain" id="PRO_0000086730" description="Serine/threonine-protein kinase TAO1">
    <location>
        <begin position="1"/>
        <end position="1001"/>
    </location>
</feature>
<feature type="domain" description="Protein kinase" evidence="5">
    <location>
        <begin position="28"/>
        <end position="281"/>
    </location>
</feature>
<feature type="region of interest" description="Disordered" evidence="7">
    <location>
        <begin position="324"/>
        <end position="380"/>
    </location>
</feature>
<feature type="region of interest" description="Disordered" evidence="7">
    <location>
        <begin position="404"/>
        <end position="431"/>
    </location>
</feature>
<feature type="region of interest" description="Disordered" evidence="7">
    <location>
        <begin position="567"/>
        <end position="587"/>
    </location>
</feature>
<feature type="region of interest" description="Disordered" evidence="7">
    <location>
        <begin position="905"/>
        <end position="1001"/>
    </location>
</feature>
<feature type="coiled-coil region" evidence="4">
    <location>
        <begin position="458"/>
        <end position="651"/>
    </location>
</feature>
<feature type="coiled-coil region" evidence="4">
    <location>
        <begin position="754"/>
        <end position="877"/>
    </location>
</feature>
<feature type="compositionally biased region" description="Low complexity" evidence="7">
    <location>
        <begin position="350"/>
        <end position="370"/>
    </location>
</feature>
<feature type="compositionally biased region" description="Basic and acidic residues" evidence="7">
    <location>
        <begin position="577"/>
        <end position="587"/>
    </location>
</feature>
<feature type="compositionally biased region" description="Polar residues" evidence="7">
    <location>
        <begin position="906"/>
        <end position="915"/>
    </location>
</feature>
<feature type="compositionally biased region" description="Polar residues" evidence="7">
    <location>
        <begin position="975"/>
        <end position="1001"/>
    </location>
</feature>
<feature type="active site" description="Proton acceptor" evidence="5 6">
    <location>
        <position position="151"/>
    </location>
</feature>
<feature type="binding site" evidence="5">
    <location>
        <begin position="34"/>
        <end position="42"/>
    </location>
    <ligand>
        <name>ATP</name>
        <dbReference type="ChEBI" id="CHEBI:30616"/>
    </ligand>
</feature>
<feature type="binding site" evidence="5">
    <location>
        <position position="57"/>
    </location>
    <ligand>
        <name>ATP</name>
        <dbReference type="ChEBI" id="CHEBI:30616"/>
    </ligand>
</feature>
<feature type="modified residue" description="Phosphoserine" evidence="3">
    <location>
        <position position="9"/>
    </location>
</feature>
<feature type="modified residue" description="Phosphoserine" evidence="3">
    <location>
        <position position="421"/>
    </location>
</feature>
<feature type="modified residue" description="Phosphoserine" evidence="3">
    <location>
        <position position="445"/>
    </location>
</feature>
<feature type="modified residue" description="Phosphothreonine" evidence="3">
    <location>
        <position position="669"/>
    </location>
</feature>
<feature type="modified residue" description="Phosphoserine" evidence="3">
    <location>
        <position position="965"/>
    </location>
</feature>
<feature type="mutagenesis site" description="Loss of serine/threonine-protein kinase without affecting interaction with SPRED1." evidence="10">
    <original>K</original>
    <variation>A</variation>
    <location>
        <position position="57"/>
    </location>
</feature>
<feature type="mutagenesis site" description="No kinase activity." evidence="11">
    <original>D</original>
    <variation>A</variation>
    <location>
        <position position="169"/>
    </location>
</feature>
<reference key="1">
    <citation type="journal article" date="1998" name="J. Biol. Chem.">
        <title>Isolation of TAO1, a protein kinase that activates MEKs in stress-activated protein kinase cascades.</title>
        <authorList>
            <person name="Hutchison M."/>
            <person name="Berman K.S."/>
            <person name="Cobb M.H."/>
        </authorList>
    </citation>
    <scope>NUCLEOTIDE SEQUENCE [MRNA]</scope>
    <scope>TISSUE SPECIFICITY</scope>
    <scope>INTERACTION WITH MKK3</scope>
    <scope>AUTOPHOSPHORYLATION</scope>
    <scope>MUTAGENESIS OF ASP-169</scope>
</reference>
<reference key="2">
    <citation type="journal article" date="2003" name="EMBO J.">
        <title>MARKK, a Ste20-like kinase, activates the polarity-inducing kinase MARK/PAR-1.</title>
        <authorList>
            <person name="Timm T."/>
            <person name="Li X.Y."/>
            <person name="Biernat J."/>
            <person name="Jiao J."/>
            <person name="Mandelkow E."/>
            <person name="Vandekerckhove J."/>
            <person name="Mandelkow E.M."/>
        </authorList>
    </citation>
    <scope>FUNCTION</scope>
    <scope>CATALYTIC ACTIVITY</scope>
    <scope>INTERACTION WITH MARK2</scope>
</reference>
<reference key="3">
    <citation type="journal article" date="2006" name="Neurodegener. Dis.">
        <title>Signaling from MARK to tau: regulation, cytoskeletal crosstalk, and pathological phosphorylation.</title>
        <authorList>
            <person name="Timm T."/>
            <person name="Matenia D."/>
            <person name="Li X.Y."/>
            <person name="Griesshaber B."/>
            <person name="Mandelkow E.M."/>
        </authorList>
    </citation>
    <scope>FUNCTION</scope>
</reference>
<reference key="4">
    <citation type="journal article" date="2008" name="Mol. Biol. Cell">
        <title>Spred1 and TESK1--two new interaction partners of the kinase MARKK/TAO1 that link the microtubule and actin cytoskeleton.</title>
        <authorList>
            <person name="Johne C."/>
            <person name="Matenia D."/>
            <person name="Li X.Y."/>
            <person name="Timm T."/>
            <person name="Balusamy K."/>
            <person name="Mandelkow E.M."/>
        </authorList>
    </citation>
    <scope>INTERACTION WITH TESK1 AND SPRED1</scope>
    <scope>ACTIVITY REGULATION</scope>
    <scope>MUTAGENESIS OF LYS-57</scope>
</reference>
<protein>
    <recommendedName>
        <fullName>Serine/threonine-protein kinase TAO1</fullName>
        <ecNumber>2.7.11.1</ecNumber>
    </recommendedName>
    <alternativeName>
        <fullName>Thousand and one amino acid protein 1</fullName>
    </alternativeName>
</protein>
<comment type="function">
    <text evidence="2 8 9">Serine/threonine-protein kinase involved in various processes such as p38/MAPK14 stress-activated MAPK cascade, DNA damage response and regulation of cytoskeleton stability. Phosphorylates MAP2K3, MAP2K6 and MARK2. Acts as an activator of the p38/MAPK14 stress-activated MAPK cascade by mediating phosphorylation and subsequent activation of the upstream MAP2K3 and MAP2K6 kinases. Involved in G-protein coupled receptor signaling to p38/MAPK14. In response to DNA damage, involved in the G2/M transition DNA damage checkpoint by activating the p38/MAPK14 stress-activated MAPK cascade, probably by mediating phosphorylation of MAP2K3 and MAP2K6. Acts as a regulator of cytoskeleton stability by phosphorylating 'Thr-208' of MARK2, leading to activate MARK2 kinase activity and subsequent phosphorylation and detachment of MAPT/TAU from microtubules. Also acts as a regulator of apoptosis: regulates apoptotic morphological changes, including cell contraction, membrane blebbing and apoptotic bodies formation via activation of the MAPK8/JNK cascade. During fetal development, it plays an essential role in the regulation of neuronal differentiation and migration to the cortical plate (By similarity).</text>
</comment>
<comment type="catalytic activity">
    <reaction evidence="8">
        <text>L-seryl-[protein] + ATP = O-phospho-L-seryl-[protein] + ADP + H(+)</text>
        <dbReference type="Rhea" id="RHEA:17989"/>
        <dbReference type="Rhea" id="RHEA-COMP:9863"/>
        <dbReference type="Rhea" id="RHEA-COMP:11604"/>
        <dbReference type="ChEBI" id="CHEBI:15378"/>
        <dbReference type="ChEBI" id="CHEBI:29999"/>
        <dbReference type="ChEBI" id="CHEBI:30616"/>
        <dbReference type="ChEBI" id="CHEBI:83421"/>
        <dbReference type="ChEBI" id="CHEBI:456216"/>
        <dbReference type="EC" id="2.7.11.1"/>
    </reaction>
</comment>
<comment type="catalytic activity">
    <reaction evidence="8">
        <text>L-threonyl-[protein] + ATP = O-phospho-L-threonyl-[protein] + ADP + H(+)</text>
        <dbReference type="Rhea" id="RHEA:46608"/>
        <dbReference type="Rhea" id="RHEA-COMP:11060"/>
        <dbReference type="Rhea" id="RHEA-COMP:11605"/>
        <dbReference type="ChEBI" id="CHEBI:15378"/>
        <dbReference type="ChEBI" id="CHEBI:30013"/>
        <dbReference type="ChEBI" id="CHEBI:30616"/>
        <dbReference type="ChEBI" id="CHEBI:61977"/>
        <dbReference type="ChEBI" id="CHEBI:456216"/>
        <dbReference type="EC" id="2.7.11.1"/>
    </reaction>
</comment>
<comment type="activity regulation">
    <text evidence="10">Serine/threonine-protein kinase activity is inhibited by SPRED1.</text>
</comment>
<comment type="subunit">
    <text evidence="1 8 10 11">Self-associates. Interacts with MAP2K3. Interacts with SPRED1 (PubMed:18216281). Interacts with TESK1; the interaction inhibits TAOK1 kinase activity (PubMed:18216281). Interacts with MAP3K7 (By similarity).</text>
</comment>
<comment type="subcellular location">
    <subcellularLocation>
        <location evidence="1">Cytoplasm</location>
    </subcellularLocation>
</comment>
<comment type="PTM">
    <text evidence="1">Proteolytically processed by caspase-3 (CASP3).</text>
</comment>
<comment type="PTM">
    <text evidence="1">Autophosphorylated (By similarity). Phosphorylated by ATM in response to DNA damage. Phosphorylated by LRRK2 (By similarity).</text>
</comment>
<comment type="similarity">
    <text evidence="12">Belongs to the protein kinase superfamily. STE Ser/Thr protein kinase family. STE20 subfamily.</text>
</comment>
<evidence type="ECO:0000250" key="1"/>
<evidence type="ECO:0000250" key="2">
    <source>
        <dbReference type="UniProtKB" id="Q5F2E8"/>
    </source>
</evidence>
<evidence type="ECO:0000250" key="3">
    <source>
        <dbReference type="UniProtKB" id="Q7L7X3"/>
    </source>
</evidence>
<evidence type="ECO:0000255" key="4"/>
<evidence type="ECO:0000255" key="5">
    <source>
        <dbReference type="PROSITE-ProRule" id="PRU00159"/>
    </source>
</evidence>
<evidence type="ECO:0000255" key="6">
    <source>
        <dbReference type="PROSITE-ProRule" id="PRU10027"/>
    </source>
</evidence>
<evidence type="ECO:0000256" key="7">
    <source>
        <dbReference type="SAM" id="MobiDB-lite"/>
    </source>
</evidence>
<evidence type="ECO:0000269" key="8">
    <source>
    </source>
</evidence>
<evidence type="ECO:0000269" key="9">
    <source>
    </source>
</evidence>
<evidence type="ECO:0000269" key="10">
    <source>
    </source>
</evidence>
<evidence type="ECO:0000269" key="11">
    <source>
    </source>
</evidence>
<evidence type="ECO:0000305" key="12"/>
<gene>
    <name type="primary">Taok1</name>
    <name type="synonym">Tao1</name>
</gene>
<sequence length="1001" mass="115952">MPSTNRAGSLKDPEIAELFFKEDPEKLFTDLREIGHGSFGAVYFARDVRTNEVVAIKKMSYSGKQSTEKWQDIIKEVKFLQRIKHPNSIEYKGCYLREHTAWLVMEYCLGSASDLLEVHKKPLQEVEIAAITHGALQGLAYLHSHTMIHRDIKAGNILLTEPGQVKLADFGSASMASPANSFVGTPYWMAPEVILAMDEGQYDGKVDVWSLGITCIELAERKPPLFNMNAMSALYHIAQNESPTLQSNEWSDYFRNFVDSCLQKIPQDRPTSEELLKHMFVLRERPETVLIDLIQRTKDAVRELDNLQYRKMKKLLFQEAHNGPAVEAQEEEEEQDHGGGRTGTVNSVGSNQSIPSMSISASSQSSSVNSLPDASDDKSELDMMEGDHTVMSNSSVIHLKPEEENYQEEGDPRTRASAPQSPPQVSRHKSHYRNREHFATIRTASLVTRQMQEHEQDSELREQMSGYKRMRRQHQKQLMTLENKLKAEMDEHRLRLDKDLETQRNNFAAEMEKLIKKHQASMEKEAKVMANEEKKFQQHIQAQQKKELNSFLESQKREYKLRKEQLKEELNENQSTPKKEKQEWLSKQKENIQHFQAEEEANLLRRQRQYLELECRRFKRRMLLGRHNLEQDLVREELNKRQTQKDLEHAMLLRQHESMQELEFRHLNTIQKMRCELIRLQHQTELTNQLEYNKRRERELRRKHVMEVRQQPKSLKSKELQIKKQFQDTCKIQTRQYKALRNHLLETTPKSEHKAVLKRLKEEQTRKLAILAEQYDHSINEMLSTQALRLDEAQEAECQVLKMQLQQELELLNAYQSKIKMQAEAQHDRELRELEQRVSLRRALLEQKIEEEMLALQNERTERIRSLLERQAREIEAFDSESMRLGFSNMVLSNLSPEAFSHSYPGASSWSHNPTGGSGPHWGHPMGGTPQAWGHPMQGGPQPWGHPSGPMQGVPRGSSIGVRNSPQALRRTASGGRTEQGMSRSTSVTSQISNGSHMSYT</sequence>
<dbReference type="EC" id="2.7.11.1"/>
<dbReference type="EMBL" id="AF084205">
    <property type="protein sequence ID" value="AAC71014.1"/>
    <property type="molecule type" value="mRNA"/>
</dbReference>
<dbReference type="PIR" id="T17365">
    <property type="entry name" value="T17365"/>
</dbReference>
<dbReference type="RefSeq" id="NP_775449.1">
    <property type="nucleotide sequence ID" value="NM_173327.1"/>
</dbReference>
<dbReference type="SMR" id="O88664"/>
<dbReference type="BioGRID" id="251966">
    <property type="interactions" value="1"/>
</dbReference>
<dbReference type="FunCoup" id="O88664">
    <property type="interactions" value="3972"/>
</dbReference>
<dbReference type="STRING" id="10116.ENSRNOP00000021368"/>
<dbReference type="iPTMnet" id="O88664"/>
<dbReference type="PhosphoSitePlus" id="O88664"/>
<dbReference type="jPOST" id="O88664"/>
<dbReference type="PaxDb" id="10116-ENSRNOP00000021368"/>
<dbReference type="GeneID" id="286993"/>
<dbReference type="KEGG" id="rno:286993"/>
<dbReference type="AGR" id="RGD:708455"/>
<dbReference type="CTD" id="57551"/>
<dbReference type="RGD" id="708455">
    <property type="gene designation" value="Taok1"/>
</dbReference>
<dbReference type="eggNOG" id="KOG0577">
    <property type="taxonomic scope" value="Eukaryota"/>
</dbReference>
<dbReference type="InParanoid" id="O88664"/>
<dbReference type="OrthoDB" id="10016527at2759"/>
<dbReference type="PhylomeDB" id="O88664"/>
<dbReference type="Reactome" id="R-RNO-141444">
    <property type="pathway name" value="Amplification of signal from unattached kinetochores via a MAD2 inhibitory signal"/>
</dbReference>
<dbReference type="Reactome" id="R-RNO-2467813">
    <property type="pathway name" value="Separation of Sister Chromatids"/>
</dbReference>
<dbReference type="Reactome" id="R-RNO-2500257">
    <property type="pathway name" value="Resolution of Sister Chromatid Cohesion"/>
</dbReference>
<dbReference type="Reactome" id="R-RNO-5663220">
    <property type="pathway name" value="RHO GTPases Activate Formins"/>
</dbReference>
<dbReference type="Reactome" id="R-RNO-68877">
    <property type="pathway name" value="Mitotic Prometaphase"/>
</dbReference>
<dbReference type="Reactome" id="R-RNO-9648025">
    <property type="pathway name" value="EML4 and NUDC in mitotic spindle formation"/>
</dbReference>
<dbReference type="PRO" id="PR:O88664"/>
<dbReference type="Proteomes" id="UP000002494">
    <property type="component" value="Unplaced"/>
</dbReference>
<dbReference type="GO" id="GO:0005737">
    <property type="term" value="C:cytoplasm"/>
    <property type="evidence" value="ECO:0000318"/>
    <property type="project" value="GO_Central"/>
</dbReference>
<dbReference type="GO" id="GO:0015630">
    <property type="term" value="C:microtubule cytoskeleton"/>
    <property type="evidence" value="ECO:0000266"/>
    <property type="project" value="RGD"/>
</dbReference>
<dbReference type="GO" id="GO:0048471">
    <property type="term" value="C:perinuclear region of cytoplasm"/>
    <property type="evidence" value="ECO:0000266"/>
    <property type="project" value="RGD"/>
</dbReference>
<dbReference type="GO" id="GO:0043014">
    <property type="term" value="F:alpha-tubulin binding"/>
    <property type="evidence" value="ECO:0000266"/>
    <property type="project" value="RGD"/>
</dbReference>
<dbReference type="GO" id="GO:0005524">
    <property type="term" value="F:ATP binding"/>
    <property type="evidence" value="ECO:0007669"/>
    <property type="project" value="UniProtKB-KW"/>
</dbReference>
<dbReference type="GO" id="GO:0048487">
    <property type="term" value="F:beta-tubulin binding"/>
    <property type="evidence" value="ECO:0000266"/>
    <property type="project" value="RGD"/>
</dbReference>
<dbReference type="GO" id="GO:0016301">
    <property type="term" value="F:kinase activity"/>
    <property type="evidence" value="ECO:0000266"/>
    <property type="project" value="RGD"/>
</dbReference>
<dbReference type="GO" id="GO:0031489">
    <property type="term" value="F:myosin V binding"/>
    <property type="evidence" value="ECO:0000353"/>
    <property type="project" value="RGD"/>
</dbReference>
<dbReference type="GO" id="GO:0030295">
    <property type="term" value="F:protein kinase activator activity"/>
    <property type="evidence" value="ECO:0000315"/>
    <property type="project" value="RGD"/>
</dbReference>
<dbReference type="GO" id="GO:0004672">
    <property type="term" value="F:protein kinase activity"/>
    <property type="evidence" value="ECO:0000314"/>
    <property type="project" value="ARUK-UCL"/>
</dbReference>
<dbReference type="GO" id="GO:0019901">
    <property type="term" value="F:protein kinase binding"/>
    <property type="evidence" value="ECO:0000314"/>
    <property type="project" value="RGD"/>
</dbReference>
<dbReference type="GO" id="GO:0106310">
    <property type="term" value="F:protein serine kinase activity"/>
    <property type="evidence" value="ECO:0007669"/>
    <property type="project" value="RHEA"/>
</dbReference>
<dbReference type="GO" id="GO:0043539">
    <property type="term" value="F:protein serine/threonine kinase activator activity"/>
    <property type="evidence" value="ECO:0000314"/>
    <property type="project" value="ARUK-UCL"/>
</dbReference>
<dbReference type="GO" id="GO:0004674">
    <property type="term" value="F:protein serine/threonine kinase activity"/>
    <property type="evidence" value="ECO:0000314"/>
    <property type="project" value="UniProtKB"/>
</dbReference>
<dbReference type="GO" id="GO:0021954">
    <property type="term" value="P:central nervous system neuron development"/>
    <property type="evidence" value="ECO:0000250"/>
    <property type="project" value="UniProtKB"/>
</dbReference>
<dbReference type="GO" id="GO:0006974">
    <property type="term" value="P:DNA damage response"/>
    <property type="evidence" value="ECO:0000250"/>
    <property type="project" value="UniProtKB"/>
</dbReference>
<dbReference type="GO" id="GO:0006281">
    <property type="term" value="P:DNA repair"/>
    <property type="evidence" value="ECO:0007669"/>
    <property type="project" value="UniProtKB-KW"/>
</dbReference>
<dbReference type="GO" id="GO:0097194">
    <property type="term" value="P:execution phase of apoptosis"/>
    <property type="evidence" value="ECO:0000250"/>
    <property type="project" value="UniProtKB"/>
</dbReference>
<dbReference type="GO" id="GO:0000226">
    <property type="term" value="P:microtubule cytoskeleton organization"/>
    <property type="evidence" value="ECO:0000266"/>
    <property type="project" value="RGD"/>
</dbReference>
<dbReference type="GO" id="GO:0007095">
    <property type="term" value="P:mitotic G2 DNA damage checkpoint signaling"/>
    <property type="evidence" value="ECO:0000250"/>
    <property type="project" value="UniProtKB"/>
</dbReference>
<dbReference type="GO" id="GO:0007026">
    <property type="term" value="P:negative regulation of microtubule depolymerization"/>
    <property type="evidence" value="ECO:0000266"/>
    <property type="project" value="RGD"/>
</dbReference>
<dbReference type="GO" id="GO:0070050">
    <property type="term" value="P:neuron cellular homeostasis"/>
    <property type="evidence" value="ECO:0000266"/>
    <property type="project" value="RGD"/>
</dbReference>
<dbReference type="GO" id="GO:0046330">
    <property type="term" value="P:positive regulation of JNK cascade"/>
    <property type="evidence" value="ECO:0000250"/>
    <property type="project" value="UniProtKB"/>
</dbReference>
<dbReference type="GO" id="GO:0032874">
    <property type="term" value="P:positive regulation of stress-activated MAPK cascade"/>
    <property type="evidence" value="ECO:0000250"/>
    <property type="project" value="UniProtKB"/>
</dbReference>
<dbReference type="GO" id="GO:0032956">
    <property type="term" value="P:regulation of actin cytoskeleton organization"/>
    <property type="evidence" value="ECO:0000315"/>
    <property type="project" value="ARUK-UCL"/>
</dbReference>
<dbReference type="GO" id="GO:0051493">
    <property type="term" value="P:regulation of cytoskeleton organization"/>
    <property type="evidence" value="ECO:0000314"/>
    <property type="project" value="UniProtKB"/>
</dbReference>
<dbReference type="GO" id="GO:0070507">
    <property type="term" value="P:regulation of microtubule cytoskeleton organization"/>
    <property type="evidence" value="ECO:0000315"/>
    <property type="project" value="ARUK-UCL"/>
</dbReference>
<dbReference type="CDD" id="cd06635">
    <property type="entry name" value="STKc_TAO1"/>
    <property type="match status" value="1"/>
</dbReference>
<dbReference type="FunFam" id="1.10.510.10:FF:000030">
    <property type="entry name" value="Serine/threonine-protein kinase TAO2, putative"/>
    <property type="match status" value="1"/>
</dbReference>
<dbReference type="FunFam" id="3.30.200.20:FF:000029">
    <property type="entry name" value="Serine/threonine-protein kinase TAO2, putative"/>
    <property type="match status" value="1"/>
</dbReference>
<dbReference type="Gene3D" id="3.30.200.20">
    <property type="entry name" value="Phosphorylase Kinase, domain 1"/>
    <property type="match status" value="1"/>
</dbReference>
<dbReference type="Gene3D" id="1.10.510.10">
    <property type="entry name" value="Transferase(Phosphotransferase) domain 1"/>
    <property type="match status" value="1"/>
</dbReference>
<dbReference type="InterPro" id="IPR011009">
    <property type="entry name" value="Kinase-like_dom_sf"/>
</dbReference>
<dbReference type="InterPro" id="IPR000719">
    <property type="entry name" value="Prot_kinase_dom"/>
</dbReference>
<dbReference type="InterPro" id="IPR017441">
    <property type="entry name" value="Protein_kinase_ATP_BS"/>
</dbReference>
<dbReference type="InterPro" id="IPR008271">
    <property type="entry name" value="Ser/Thr_kinase_AS"/>
</dbReference>
<dbReference type="InterPro" id="IPR051234">
    <property type="entry name" value="TAO_STE20_kinase"/>
</dbReference>
<dbReference type="PANTHER" id="PTHR47167">
    <property type="entry name" value="SERINE/THREONINE-PROTEIN KINASE TAO1-LIKE PROTEIN"/>
    <property type="match status" value="1"/>
</dbReference>
<dbReference type="PANTHER" id="PTHR47167:SF8">
    <property type="entry name" value="SERINE_THREONINE-PROTEIN KINASE TAO1"/>
    <property type="match status" value="1"/>
</dbReference>
<dbReference type="Pfam" id="PF00069">
    <property type="entry name" value="Pkinase"/>
    <property type="match status" value="1"/>
</dbReference>
<dbReference type="SMART" id="SM00220">
    <property type="entry name" value="S_TKc"/>
    <property type="match status" value="1"/>
</dbReference>
<dbReference type="SUPFAM" id="SSF56112">
    <property type="entry name" value="Protein kinase-like (PK-like)"/>
    <property type="match status" value="1"/>
</dbReference>
<dbReference type="PROSITE" id="PS00107">
    <property type="entry name" value="PROTEIN_KINASE_ATP"/>
    <property type="match status" value="1"/>
</dbReference>
<dbReference type="PROSITE" id="PS50011">
    <property type="entry name" value="PROTEIN_KINASE_DOM"/>
    <property type="match status" value="1"/>
</dbReference>
<dbReference type="PROSITE" id="PS00108">
    <property type="entry name" value="PROTEIN_KINASE_ST"/>
    <property type="match status" value="1"/>
</dbReference>